<organism>
    <name type="scientific">Nitrosospira multiformis (strain ATCC 25196 / NCIMB 11849 / C 71)</name>
    <dbReference type="NCBI Taxonomy" id="323848"/>
    <lineage>
        <taxon>Bacteria</taxon>
        <taxon>Pseudomonadati</taxon>
        <taxon>Pseudomonadota</taxon>
        <taxon>Betaproteobacteria</taxon>
        <taxon>Nitrosomonadales</taxon>
        <taxon>Nitrosomonadaceae</taxon>
        <taxon>Nitrosospira</taxon>
    </lineage>
</organism>
<reference key="1">
    <citation type="submission" date="2005-08" db="EMBL/GenBank/DDBJ databases">
        <title>Complete sequence of chromosome 1 of Nitrosospira multiformis ATCC 25196.</title>
        <authorList>
            <person name="Copeland A."/>
            <person name="Lucas S."/>
            <person name="Lapidus A."/>
            <person name="Barry K."/>
            <person name="Detter J.C."/>
            <person name="Glavina T."/>
            <person name="Hammon N."/>
            <person name="Israni S."/>
            <person name="Pitluck S."/>
            <person name="Chain P."/>
            <person name="Malfatti S."/>
            <person name="Shin M."/>
            <person name="Vergez L."/>
            <person name="Schmutz J."/>
            <person name="Larimer F."/>
            <person name="Land M."/>
            <person name="Hauser L."/>
            <person name="Kyrpides N."/>
            <person name="Lykidis A."/>
            <person name="Richardson P."/>
        </authorList>
    </citation>
    <scope>NUCLEOTIDE SEQUENCE [LARGE SCALE GENOMIC DNA]</scope>
    <source>
        <strain>ATCC 25196 / NCIMB 11849 / C 71</strain>
    </source>
</reference>
<proteinExistence type="inferred from homology"/>
<keyword id="KW-0028">Amino-acid biosynthesis</keyword>
<keyword id="KW-0057">Aromatic amino acid biosynthesis</keyword>
<keyword id="KW-0274">FAD</keyword>
<keyword id="KW-0285">Flavoprotein</keyword>
<keyword id="KW-0288">FMN</keyword>
<keyword id="KW-0456">Lyase</keyword>
<keyword id="KW-0521">NADP</keyword>
<keyword id="KW-1185">Reference proteome</keyword>
<gene>
    <name evidence="1" type="primary">aroC</name>
    <name type="ordered locus">Nmul_A1958</name>
</gene>
<name>AROC_NITMU</name>
<protein>
    <recommendedName>
        <fullName evidence="1">Chorismate synthase</fullName>
        <shortName evidence="1">CS</shortName>
        <ecNumber evidence="1">4.2.3.5</ecNumber>
    </recommendedName>
    <alternativeName>
        <fullName evidence="1">5-enolpyruvylshikimate-3-phosphate phospholyase</fullName>
    </alternativeName>
</protein>
<dbReference type="EC" id="4.2.3.5" evidence="1"/>
<dbReference type="EMBL" id="CP000103">
    <property type="protein sequence ID" value="ABB75253.1"/>
    <property type="molecule type" value="Genomic_DNA"/>
</dbReference>
<dbReference type="RefSeq" id="WP_011381273.1">
    <property type="nucleotide sequence ID" value="NC_007614.1"/>
</dbReference>
<dbReference type="SMR" id="Q2Y7L8"/>
<dbReference type="STRING" id="323848.Nmul_A1958"/>
<dbReference type="KEGG" id="nmu:Nmul_A1958"/>
<dbReference type="eggNOG" id="COG0082">
    <property type="taxonomic scope" value="Bacteria"/>
</dbReference>
<dbReference type="HOGENOM" id="CLU_034547_0_2_4"/>
<dbReference type="OrthoDB" id="9771806at2"/>
<dbReference type="UniPathway" id="UPA00053">
    <property type="reaction ID" value="UER00090"/>
</dbReference>
<dbReference type="Proteomes" id="UP000002718">
    <property type="component" value="Chromosome"/>
</dbReference>
<dbReference type="GO" id="GO:0005829">
    <property type="term" value="C:cytosol"/>
    <property type="evidence" value="ECO:0007669"/>
    <property type="project" value="TreeGrafter"/>
</dbReference>
<dbReference type="GO" id="GO:0004107">
    <property type="term" value="F:chorismate synthase activity"/>
    <property type="evidence" value="ECO:0007669"/>
    <property type="project" value="UniProtKB-UniRule"/>
</dbReference>
<dbReference type="GO" id="GO:0010181">
    <property type="term" value="F:FMN binding"/>
    <property type="evidence" value="ECO:0007669"/>
    <property type="project" value="TreeGrafter"/>
</dbReference>
<dbReference type="GO" id="GO:0008652">
    <property type="term" value="P:amino acid biosynthetic process"/>
    <property type="evidence" value="ECO:0007669"/>
    <property type="project" value="UniProtKB-KW"/>
</dbReference>
<dbReference type="GO" id="GO:0009073">
    <property type="term" value="P:aromatic amino acid family biosynthetic process"/>
    <property type="evidence" value="ECO:0007669"/>
    <property type="project" value="UniProtKB-KW"/>
</dbReference>
<dbReference type="GO" id="GO:0009423">
    <property type="term" value="P:chorismate biosynthetic process"/>
    <property type="evidence" value="ECO:0007669"/>
    <property type="project" value="UniProtKB-UniRule"/>
</dbReference>
<dbReference type="CDD" id="cd07304">
    <property type="entry name" value="Chorismate_synthase"/>
    <property type="match status" value="1"/>
</dbReference>
<dbReference type="FunFam" id="3.60.150.10:FF:000001">
    <property type="entry name" value="Chorismate synthase"/>
    <property type="match status" value="1"/>
</dbReference>
<dbReference type="Gene3D" id="3.60.150.10">
    <property type="entry name" value="Chorismate synthase AroC"/>
    <property type="match status" value="1"/>
</dbReference>
<dbReference type="HAMAP" id="MF_00300">
    <property type="entry name" value="Chorismate_synth"/>
    <property type="match status" value="1"/>
</dbReference>
<dbReference type="InterPro" id="IPR000453">
    <property type="entry name" value="Chorismate_synth"/>
</dbReference>
<dbReference type="InterPro" id="IPR035904">
    <property type="entry name" value="Chorismate_synth_AroC_sf"/>
</dbReference>
<dbReference type="InterPro" id="IPR020541">
    <property type="entry name" value="Chorismate_synthase_CS"/>
</dbReference>
<dbReference type="NCBIfam" id="TIGR00033">
    <property type="entry name" value="aroC"/>
    <property type="match status" value="1"/>
</dbReference>
<dbReference type="NCBIfam" id="NF003793">
    <property type="entry name" value="PRK05382.1"/>
    <property type="match status" value="1"/>
</dbReference>
<dbReference type="PANTHER" id="PTHR21085">
    <property type="entry name" value="CHORISMATE SYNTHASE"/>
    <property type="match status" value="1"/>
</dbReference>
<dbReference type="PANTHER" id="PTHR21085:SF0">
    <property type="entry name" value="CHORISMATE SYNTHASE"/>
    <property type="match status" value="1"/>
</dbReference>
<dbReference type="Pfam" id="PF01264">
    <property type="entry name" value="Chorismate_synt"/>
    <property type="match status" value="1"/>
</dbReference>
<dbReference type="PIRSF" id="PIRSF001456">
    <property type="entry name" value="Chorismate_synth"/>
    <property type="match status" value="1"/>
</dbReference>
<dbReference type="SUPFAM" id="SSF103263">
    <property type="entry name" value="Chorismate synthase, AroC"/>
    <property type="match status" value="1"/>
</dbReference>
<dbReference type="PROSITE" id="PS00787">
    <property type="entry name" value="CHORISMATE_SYNTHASE_1"/>
    <property type="match status" value="1"/>
</dbReference>
<dbReference type="PROSITE" id="PS00788">
    <property type="entry name" value="CHORISMATE_SYNTHASE_2"/>
    <property type="match status" value="1"/>
</dbReference>
<dbReference type="PROSITE" id="PS00789">
    <property type="entry name" value="CHORISMATE_SYNTHASE_3"/>
    <property type="match status" value="1"/>
</dbReference>
<accession>Q2Y7L8</accession>
<sequence>MSGNTFGKLFCVTSFGESHGPALGCVVDGCPPGMELSAEDIQQDLDRRKPGTSRHVTQRREPDTVEILSGVFEGKTTGTPIALLIRNEDQRSKDYSKIMDTFRPGHADYVYWQKYGIRDYRGGGRSSARETAVRVAAAAIAKKWLRARYGVVIRGHMAQLGPVEIPFKQWEAVGENPFFSADPDIVPSLEEFMDKLRKSGDSVGARIRVVAEGVPVGWGEPVYDRLDAEIAYGMMSINAVKGVEIGAGFASVSQKGTEHSDEISPGGFLSNNAGGILGGISTGQDIVVNIAVKPTSSIRLPRRSVDKMGNPAIVETHGRHDPCVGIRATPIAEAMLALVLMDHALRNRAQNADVACTTPKIPGHTGPREGQEEGPSDSEPKVEFADDPEPDEA</sequence>
<feature type="chain" id="PRO_0000256305" description="Chorismate synthase">
    <location>
        <begin position="1"/>
        <end position="393"/>
    </location>
</feature>
<feature type="region of interest" description="Disordered" evidence="2">
    <location>
        <begin position="355"/>
        <end position="393"/>
    </location>
</feature>
<feature type="binding site" evidence="1">
    <location>
        <position position="48"/>
    </location>
    <ligand>
        <name>NADP(+)</name>
        <dbReference type="ChEBI" id="CHEBI:58349"/>
    </ligand>
</feature>
<feature type="binding site" evidence="1">
    <location>
        <position position="54"/>
    </location>
    <ligand>
        <name>NADP(+)</name>
        <dbReference type="ChEBI" id="CHEBI:58349"/>
    </ligand>
</feature>
<feature type="binding site" evidence="1">
    <location>
        <begin position="125"/>
        <end position="127"/>
    </location>
    <ligand>
        <name>FMN</name>
        <dbReference type="ChEBI" id="CHEBI:58210"/>
    </ligand>
</feature>
<feature type="binding site" evidence="1">
    <location>
        <begin position="238"/>
        <end position="239"/>
    </location>
    <ligand>
        <name>FMN</name>
        <dbReference type="ChEBI" id="CHEBI:58210"/>
    </ligand>
</feature>
<feature type="binding site" evidence="1">
    <location>
        <position position="278"/>
    </location>
    <ligand>
        <name>FMN</name>
        <dbReference type="ChEBI" id="CHEBI:58210"/>
    </ligand>
</feature>
<feature type="binding site" evidence="1">
    <location>
        <begin position="293"/>
        <end position="297"/>
    </location>
    <ligand>
        <name>FMN</name>
        <dbReference type="ChEBI" id="CHEBI:58210"/>
    </ligand>
</feature>
<feature type="binding site" evidence="1">
    <location>
        <position position="319"/>
    </location>
    <ligand>
        <name>FMN</name>
        <dbReference type="ChEBI" id="CHEBI:58210"/>
    </ligand>
</feature>
<evidence type="ECO:0000255" key="1">
    <source>
        <dbReference type="HAMAP-Rule" id="MF_00300"/>
    </source>
</evidence>
<evidence type="ECO:0000256" key="2">
    <source>
        <dbReference type="SAM" id="MobiDB-lite"/>
    </source>
</evidence>
<comment type="function">
    <text evidence="1">Catalyzes the anti-1,4-elimination of the C-3 phosphate and the C-6 proR hydrogen from 5-enolpyruvylshikimate-3-phosphate (EPSP) to yield chorismate, which is the branch point compound that serves as the starting substrate for the three terminal pathways of aromatic amino acid biosynthesis. This reaction introduces a second double bond into the aromatic ring system.</text>
</comment>
<comment type="catalytic activity">
    <reaction evidence="1">
        <text>5-O-(1-carboxyvinyl)-3-phosphoshikimate = chorismate + phosphate</text>
        <dbReference type="Rhea" id="RHEA:21020"/>
        <dbReference type="ChEBI" id="CHEBI:29748"/>
        <dbReference type="ChEBI" id="CHEBI:43474"/>
        <dbReference type="ChEBI" id="CHEBI:57701"/>
        <dbReference type="EC" id="4.2.3.5"/>
    </reaction>
</comment>
<comment type="cofactor">
    <cofactor evidence="1">
        <name>FMNH2</name>
        <dbReference type="ChEBI" id="CHEBI:57618"/>
    </cofactor>
    <text evidence="1">Reduced FMN (FMNH(2)).</text>
</comment>
<comment type="pathway">
    <text evidence="1">Metabolic intermediate biosynthesis; chorismate biosynthesis; chorismate from D-erythrose 4-phosphate and phosphoenolpyruvate: step 7/7.</text>
</comment>
<comment type="subunit">
    <text evidence="1">Homotetramer.</text>
</comment>
<comment type="similarity">
    <text evidence="1">Belongs to the chorismate synthase family.</text>
</comment>